<gene>
    <name type="primary">HBA</name>
</gene>
<accession>P67816</accession>
<accession>P07426</accession>
<proteinExistence type="evidence at protein level"/>
<evidence type="ECO:0000250" key="1">
    <source>
        <dbReference type="UniProtKB" id="P01942"/>
    </source>
</evidence>
<evidence type="ECO:0000250" key="2">
    <source>
        <dbReference type="UniProtKB" id="P01946"/>
    </source>
</evidence>
<evidence type="ECO:0000250" key="3">
    <source>
        <dbReference type="UniProtKB" id="P69905"/>
    </source>
</evidence>
<evidence type="ECO:0000255" key="4">
    <source>
        <dbReference type="PROSITE-ProRule" id="PRU00238"/>
    </source>
</evidence>
<keyword id="KW-0007">Acetylation</keyword>
<keyword id="KW-0903">Direct protein sequencing</keyword>
<keyword id="KW-0349">Heme</keyword>
<keyword id="KW-0408">Iron</keyword>
<keyword id="KW-0479">Metal-binding</keyword>
<keyword id="KW-0561">Oxygen transport</keyword>
<keyword id="KW-0597">Phosphoprotein</keyword>
<keyword id="KW-1185">Reference proteome</keyword>
<keyword id="KW-0813">Transport</keyword>
<sequence>VLSSKDKANIKTAFGKIGGHAADYGAEALERMFLGFPTTKTYFPHFDLSHGSAQVKAHGKKVGDALTKAADHLDDLPSALSALSDLHAHKLRVDPVNFKLLSHCLLVTVAAHHPGDFTPAVHASLDKFLANVSTVLTSKYR</sequence>
<name>HBA_VICPA</name>
<comment type="function">
    <text>Involved in oxygen transport from the lung to the various peripheral tissues.</text>
</comment>
<comment type="function">
    <molecule>Hemopressin</molecule>
    <text evidence="2">Hemopressin acts as an antagonist peptide of the cannabinoid receptor CNR1. Hemopressin-binding efficiently blocks cannabinoid receptor CNR1 and subsequent signaling.</text>
</comment>
<comment type="subunit">
    <text>Heterotetramer of two alpha chains and two beta chains.</text>
</comment>
<comment type="tissue specificity">
    <text>Red blood cells.</text>
</comment>
<comment type="similarity">
    <text evidence="4">Belongs to the globin family.</text>
</comment>
<reference key="1">
    <citation type="journal article" date="1986" name="Biol. Chem. Hoppe-Seyler">
        <title>Interaction of allosteric effectors with alpha-globin chains and high altitude respiration of mammals. The primary structure of two tylopoda hemoglobins with high oxygen affinity: vicuna (Lama vicugna) and alpaca (Lama pacos).</title>
        <authorList>
            <person name="Kleinschmidt T."/>
            <person name="Marz J."/>
            <person name="Jurgens K.D."/>
            <person name="Braunitzer G."/>
        </authorList>
    </citation>
    <scope>PROTEIN SEQUENCE</scope>
</reference>
<feature type="chain" id="PRO_0000052659" description="Hemoglobin subunit alpha">
    <location>
        <begin position="1"/>
        <end position="141"/>
    </location>
</feature>
<feature type="peptide" id="PRO_0000455887" description="Hemopressin" evidence="2">
    <location>
        <begin position="95"/>
        <end position="103"/>
    </location>
</feature>
<feature type="domain" description="Globin" evidence="4">
    <location>
        <begin position="1"/>
        <end position="141"/>
    </location>
</feature>
<feature type="binding site" evidence="4">
    <location>
        <position position="58"/>
    </location>
    <ligand>
        <name>O2</name>
        <dbReference type="ChEBI" id="CHEBI:15379"/>
    </ligand>
</feature>
<feature type="binding site" description="proximal binding residue" evidence="4">
    <location>
        <position position="87"/>
    </location>
    <ligand>
        <name>heme b</name>
        <dbReference type="ChEBI" id="CHEBI:60344"/>
    </ligand>
    <ligandPart>
        <name>Fe</name>
        <dbReference type="ChEBI" id="CHEBI:18248"/>
    </ligandPart>
</feature>
<feature type="modified residue" description="Phosphoserine" evidence="3">
    <location>
        <position position="3"/>
    </location>
</feature>
<feature type="modified residue" description="N6-succinyllysine" evidence="1">
    <location>
        <position position="7"/>
    </location>
</feature>
<feature type="modified residue" description="N6-succinyllysine" evidence="1">
    <location>
        <position position="11"/>
    </location>
</feature>
<feature type="modified residue" description="N6-acetyllysine; alternate" evidence="3">
    <location>
        <position position="16"/>
    </location>
</feature>
<feature type="modified residue" description="N6-succinyllysine; alternate" evidence="1">
    <location>
        <position position="16"/>
    </location>
</feature>
<feature type="modified residue" description="Phosphotyrosine" evidence="3">
    <location>
        <position position="24"/>
    </location>
</feature>
<feature type="modified residue" description="N6-succinyllysine" evidence="1">
    <location>
        <position position="40"/>
    </location>
</feature>
<feature type="modified residue" description="Phosphoserine" evidence="3">
    <location>
        <position position="49"/>
    </location>
</feature>
<feature type="modified residue" description="Phosphoserine" evidence="1">
    <location>
        <position position="102"/>
    </location>
</feature>
<feature type="modified residue" description="Phosphothreonine" evidence="1">
    <location>
        <position position="108"/>
    </location>
</feature>
<feature type="modified residue" description="Phosphoserine" evidence="1">
    <location>
        <position position="124"/>
    </location>
</feature>
<feature type="modified residue" description="Phosphothreonine" evidence="1">
    <location>
        <position position="134"/>
    </location>
</feature>
<feature type="modified residue" description="Phosphothreonine" evidence="1">
    <location>
        <position position="137"/>
    </location>
</feature>
<feature type="modified residue" description="Phosphoserine" evidence="1">
    <location>
        <position position="138"/>
    </location>
</feature>
<protein>
    <recommendedName>
        <fullName>Hemoglobin subunit alpha</fullName>
    </recommendedName>
    <alternativeName>
        <fullName>Alpha-globin</fullName>
    </alternativeName>
    <alternativeName>
        <fullName>Hemoglobin alpha chain</fullName>
    </alternativeName>
    <component>
        <recommendedName>
            <fullName evidence="2">Hemopressin</fullName>
        </recommendedName>
    </component>
</protein>
<organism>
    <name type="scientific">Vicugna pacos</name>
    <name type="common">Alpaca</name>
    <name type="synonym">Lama pacos</name>
    <dbReference type="NCBI Taxonomy" id="30538"/>
    <lineage>
        <taxon>Eukaryota</taxon>
        <taxon>Metazoa</taxon>
        <taxon>Chordata</taxon>
        <taxon>Craniata</taxon>
        <taxon>Vertebrata</taxon>
        <taxon>Euteleostomi</taxon>
        <taxon>Mammalia</taxon>
        <taxon>Eutheria</taxon>
        <taxon>Laurasiatheria</taxon>
        <taxon>Artiodactyla</taxon>
        <taxon>Tylopoda</taxon>
        <taxon>Camelidae</taxon>
        <taxon>Vicugna</taxon>
    </lineage>
</organism>
<dbReference type="PIR" id="C25478">
    <property type="entry name" value="C25478"/>
</dbReference>
<dbReference type="SMR" id="P67816"/>
<dbReference type="FunCoup" id="P67816">
    <property type="interactions" value="60"/>
</dbReference>
<dbReference type="HOGENOM" id="CLU_003827_10_2_1"/>
<dbReference type="InParanoid" id="P67816"/>
<dbReference type="TreeFam" id="TF332328"/>
<dbReference type="Proteomes" id="UP000504605">
    <property type="component" value="Unplaced"/>
</dbReference>
<dbReference type="GO" id="GO:0072562">
    <property type="term" value="C:blood microparticle"/>
    <property type="evidence" value="ECO:0007669"/>
    <property type="project" value="TreeGrafter"/>
</dbReference>
<dbReference type="GO" id="GO:0031838">
    <property type="term" value="C:haptoglobin-hemoglobin complex"/>
    <property type="evidence" value="ECO:0007669"/>
    <property type="project" value="TreeGrafter"/>
</dbReference>
<dbReference type="GO" id="GO:0005833">
    <property type="term" value="C:hemoglobin complex"/>
    <property type="evidence" value="ECO:0007669"/>
    <property type="project" value="InterPro"/>
</dbReference>
<dbReference type="GO" id="GO:0031720">
    <property type="term" value="F:haptoglobin binding"/>
    <property type="evidence" value="ECO:0007669"/>
    <property type="project" value="TreeGrafter"/>
</dbReference>
<dbReference type="GO" id="GO:0020037">
    <property type="term" value="F:heme binding"/>
    <property type="evidence" value="ECO:0007669"/>
    <property type="project" value="InterPro"/>
</dbReference>
<dbReference type="GO" id="GO:0005506">
    <property type="term" value="F:iron ion binding"/>
    <property type="evidence" value="ECO:0007669"/>
    <property type="project" value="InterPro"/>
</dbReference>
<dbReference type="GO" id="GO:0043177">
    <property type="term" value="F:organic acid binding"/>
    <property type="evidence" value="ECO:0007669"/>
    <property type="project" value="TreeGrafter"/>
</dbReference>
<dbReference type="GO" id="GO:0019825">
    <property type="term" value="F:oxygen binding"/>
    <property type="evidence" value="ECO:0007669"/>
    <property type="project" value="InterPro"/>
</dbReference>
<dbReference type="GO" id="GO:0005344">
    <property type="term" value="F:oxygen carrier activity"/>
    <property type="evidence" value="ECO:0007669"/>
    <property type="project" value="UniProtKB-KW"/>
</dbReference>
<dbReference type="GO" id="GO:0004601">
    <property type="term" value="F:peroxidase activity"/>
    <property type="evidence" value="ECO:0007669"/>
    <property type="project" value="TreeGrafter"/>
</dbReference>
<dbReference type="GO" id="GO:0042744">
    <property type="term" value="P:hydrogen peroxide catabolic process"/>
    <property type="evidence" value="ECO:0007669"/>
    <property type="project" value="TreeGrafter"/>
</dbReference>
<dbReference type="CDD" id="cd08927">
    <property type="entry name" value="Hb-alpha-like"/>
    <property type="match status" value="1"/>
</dbReference>
<dbReference type="FunFam" id="1.10.490.10:FF:000002">
    <property type="entry name" value="Hemoglobin subunit alpha"/>
    <property type="match status" value="1"/>
</dbReference>
<dbReference type="Gene3D" id="1.10.490.10">
    <property type="entry name" value="Globins"/>
    <property type="match status" value="1"/>
</dbReference>
<dbReference type="InterPro" id="IPR000971">
    <property type="entry name" value="Globin"/>
</dbReference>
<dbReference type="InterPro" id="IPR009050">
    <property type="entry name" value="Globin-like_sf"/>
</dbReference>
<dbReference type="InterPro" id="IPR012292">
    <property type="entry name" value="Globin/Proto"/>
</dbReference>
<dbReference type="InterPro" id="IPR002338">
    <property type="entry name" value="Hemoglobin_a-typ"/>
</dbReference>
<dbReference type="InterPro" id="IPR050056">
    <property type="entry name" value="Hemoglobin_oxygen_transport"/>
</dbReference>
<dbReference type="InterPro" id="IPR002339">
    <property type="entry name" value="Hemoglobin_pi"/>
</dbReference>
<dbReference type="PANTHER" id="PTHR11442">
    <property type="entry name" value="HEMOGLOBIN FAMILY MEMBER"/>
    <property type="match status" value="1"/>
</dbReference>
<dbReference type="PANTHER" id="PTHR11442:SF48">
    <property type="entry name" value="HEMOGLOBIN SUBUNIT ALPHA"/>
    <property type="match status" value="1"/>
</dbReference>
<dbReference type="Pfam" id="PF00042">
    <property type="entry name" value="Globin"/>
    <property type="match status" value="1"/>
</dbReference>
<dbReference type="PRINTS" id="PR00612">
    <property type="entry name" value="ALPHAHAEM"/>
</dbReference>
<dbReference type="PRINTS" id="PR00815">
    <property type="entry name" value="PIHAEM"/>
</dbReference>
<dbReference type="SUPFAM" id="SSF46458">
    <property type="entry name" value="Globin-like"/>
    <property type="match status" value="1"/>
</dbReference>
<dbReference type="PROSITE" id="PS01033">
    <property type="entry name" value="GLOBIN"/>
    <property type="match status" value="1"/>
</dbReference>